<comment type="function">
    <text>Inhibits hemopoiesis and stimulates chemotaxis. Chemotactic in vitro for thymocytes and activated T-cells, but not for B-cells, macrophages, or neutrophils. Potent mesangial cell chemoattractant. Shows preferential activity towards naive T-cells. May play a role in mediating homing of lymphocytes to secondary lymphoid organs.</text>
</comment>
<comment type="subunit">
    <text evidence="2 3">Binds to CCR7 and to CXCR3. Interacts with PDPN; relocalizes PDPN to the basolateral membrane. Interacts with GPR174.</text>
</comment>
<comment type="subcellular location">
    <subcellularLocation>
        <location>Secreted</location>
    </subcellularLocation>
</comment>
<comment type="tissue specificity">
    <text>Expressed strongly in lung, spleen, thymus, peripheral and mesentric lymph nodes. Also expressed in the testis, kidney, liver, and heart.</text>
</comment>
<comment type="miscellaneous">
    <text>Three genes code for Ccl21 in mouse. Ccl21b and Ccl21c produce identical proteins while the protein produced by Ccl21a differs at only one position. Ccl21b and Ccl21c have Leu-65 (6Ckine-Leu) while Ccl21a has 'Ser-65' (6Ckine-Ser).</text>
</comment>
<comment type="similarity">
    <text evidence="6">Belongs to the intercrine beta (chemokine CC) family.</text>
</comment>
<gene>
    <name type="primary">Ccl21b</name>
    <name type="synonym">Scya21</name>
    <name type="synonym">Scya21b</name>
</gene>
<keyword id="KW-0145">Chemotaxis</keyword>
<keyword id="KW-0202">Cytokine</keyword>
<keyword id="KW-1015">Disulfide bond</keyword>
<keyword id="KW-0395">Inflammatory response</keyword>
<keyword id="KW-1185">Reference proteome</keyword>
<keyword id="KW-0964">Secreted</keyword>
<keyword id="KW-0732">Signal</keyword>
<accession>P86792</accession>
<accession>O09002</accession>
<accession>O09006</accession>
<accession>P84443</accession>
<accession>Q5M8M5</accession>
<accession>Q91V84</accession>
<dbReference type="EMBL" id="U88322">
    <property type="protein sequence ID" value="AAC17929.1"/>
    <property type="molecule type" value="mRNA"/>
</dbReference>
<dbReference type="EMBL" id="AF171085">
    <property type="protein sequence ID" value="AAF16900.1"/>
    <property type="molecule type" value="Genomic_DNA"/>
</dbReference>
<dbReference type="EMBL" id="AF307986">
    <property type="protein sequence ID" value="AAG45834.1"/>
    <property type="molecule type" value="Genomic_DNA"/>
</dbReference>
<dbReference type="EMBL" id="AL824709">
    <property type="status" value="NOT_ANNOTATED_CDS"/>
    <property type="molecule type" value="Genomic_DNA"/>
</dbReference>
<dbReference type="CCDS" id="CCDS51145.1"/>
<dbReference type="CCDS" id="CCDS51148.1"/>
<dbReference type="CCDS" id="CCDS51158.1"/>
<dbReference type="CCDS" id="CCDS57267.1"/>
<dbReference type="RefSeq" id="NP_001180595.1">
    <property type="nucleotide sequence ID" value="NM_001193666.1"/>
</dbReference>
<dbReference type="RefSeq" id="NP_001180597.1">
    <property type="nucleotide sequence ID" value="NM_001193668.1"/>
</dbReference>
<dbReference type="RefSeq" id="NP_001257289.1">
    <property type="nucleotide sequence ID" value="NM_001270360.1"/>
</dbReference>
<dbReference type="RefSeq" id="NP_035465.2">
    <property type="nucleotide sequence ID" value="NM_011335.3"/>
</dbReference>
<dbReference type="RefSeq" id="NP_075539.1">
    <property type="nucleotide sequence ID" value="NM_023052.2"/>
</dbReference>
<dbReference type="RefSeq" id="XP_001473308.1">
    <property type="nucleotide sequence ID" value="XM_001473258.5"/>
</dbReference>
<dbReference type="RefSeq" id="XP_001473444.1">
    <property type="nucleotide sequence ID" value="XM_001473394.6"/>
</dbReference>
<dbReference type="RefSeq" id="XP_036019421.1">
    <property type="nucleotide sequence ID" value="XM_036163528.1"/>
</dbReference>
<dbReference type="SMR" id="P86792"/>
<dbReference type="FunCoup" id="P86792">
    <property type="interactions" value="653"/>
</dbReference>
<dbReference type="STRING" id="10090.ENSMUSP00000095727"/>
<dbReference type="jPOST" id="P86792"/>
<dbReference type="PaxDb" id="10090-ENSMUSP00000095727"/>
<dbReference type="PeptideAtlas" id="P86792"/>
<dbReference type="ProteomicsDB" id="279943"/>
<dbReference type="DNASU" id="65956"/>
<dbReference type="Ensembl" id="ENSMUST00000098123.4">
    <property type="protein sequence ID" value="ENSMUSP00000095727.4"/>
    <property type="gene ID" value="ENSMUSG00000073878.4"/>
</dbReference>
<dbReference type="Ensembl" id="ENSMUST00000098128.4">
    <property type="protein sequence ID" value="ENSMUSP00000095732.4"/>
    <property type="gene ID" value="ENSMUSG00000094065.2"/>
</dbReference>
<dbReference type="Ensembl" id="ENSMUST00000178168.3">
    <property type="protein sequence ID" value="ENSMUSP00000136903.2"/>
    <property type="gene ID" value="ENSMUSG00000096596.3"/>
</dbReference>
<dbReference type="Ensembl" id="ENSMUST00000178864.3">
    <property type="protein sequence ID" value="ENSMUSP00000137149.2"/>
    <property type="gene ID" value="ENSMUSG00000095675.3"/>
</dbReference>
<dbReference type="GeneID" id="100042493"/>
<dbReference type="GeneID" id="100504239"/>
<dbReference type="GeneID" id="100504346"/>
<dbReference type="GeneID" id="100862177"/>
<dbReference type="KEGG" id="mmu:100042493"/>
<dbReference type="KEGG" id="mmu:100504239"/>
<dbReference type="KEGG" id="mmu:100504346"/>
<dbReference type="KEGG" id="mmu:100862177"/>
<dbReference type="UCSC" id="uc008skt.1">
    <property type="organism name" value="mouse"/>
</dbReference>
<dbReference type="AGR" id="MGI:1349182"/>
<dbReference type="CTD" id="100042493"/>
<dbReference type="CTD" id="100504239"/>
<dbReference type="CTD" id="100504346"/>
<dbReference type="CTD" id="100862177"/>
<dbReference type="MGI" id="MGI:1349182">
    <property type="gene designation" value="Ccl21b"/>
</dbReference>
<dbReference type="VEuPathDB" id="HostDB:ENSMUSG00000073878"/>
<dbReference type="VEuPathDB" id="HostDB:ENSMUSG00000094065"/>
<dbReference type="VEuPathDB" id="HostDB:ENSMUSG00000094121"/>
<dbReference type="VEuPathDB" id="HostDB:ENSMUSG00000095675"/>
<dbReference type="VEuPathDB" id="HostDB:ENSMUSG00000096271"/>
<dbReference type="VEuPathDB" id="HostDB:ENSMUSG00000096596"/>
<dbReference type="VEuPathDB" id="HostDB:ENSMUSG00000096873"/>
<dbReference type="eggNOG" id="ENOG502S8D1">
    <property type="taxonomic scope" value="Eukaryota"/>
</dbReference>
<dbReference type="HOGENOM" id="CLU_141716_3_2_1"/>
<dbReference type="InParanoid" id="P86792"/>
<dbReference type="OMA" id="SDCCLKH"/>
<dbReference type="OrthoDB" id="9445745at2759"/>
<dbReference type="PhylomeDB" id="P86792"/>
<dbReference type="Reactome" id="R-MMU-380108">
    <property type="pathway name" value="Chemokine receptors bind chemokines"/>
</dbReference>
<dbReference type="Reactome" id="R-MMU-418594">
    <property type="pathway name" value="G alpha (i) signalling events"/>
</dbReference>
<dbReference type="BioGRID-ORCS" id="100042493">
    <property type="hits" value="4 hits in 37 CRISPR screens"/>
</dbReference>
<dbReference type="BioGRID-ORCS" id="100504239">
    <property type="hits" value="0 hits in 11 CRISPR screens"/>
</dbReference>
<dbReference type="BioGRID-ORCS" id="100504346">
    <property type="hits" value="0 hits in 12 CRISPR screens"/>
</dbReference>
<dbReference type="BioGRID-ORCS" id="100862177">
    <property type="hits" value="2 hits in 23 CRISPR screens"/>
</dbReference>
<dbReference type="BioGRID-ORCS" id="65956">
    <property type="hits" value="0 hits in 4 CRISPR screens"/>
</dbReference>
<dbReference type="ChiTaRS" id="Ccl21a">
    <property type="organism name" value="mouse"/>
</dbReference>
<dbReference type="PRO" id="PR:P86792"/>
<dbReference type="Proteomes" id="UP000000589">
    <property type="component" value="Chromosome 4"/>
</dbReference>
<dbReference type="RNAct" id="P86792">
    <property type="molecule type" value="protein"/>
</dbReference>
<dbReference type="Bgee" id="ENSMUSG00000073878">
    <property type="expression patterns" value="Expressed in urinary bladder and 29 other cell types or tissues"/>
</dbReference>
<dbReference type="ExpressionAtlas" id="P86792">
    <property type="expression patterns" value="differential"/>
</dbReference>
<dbReference type="GO" id="GO:0009897">
    <property type="term" value="C:external side of plasma membrane"/>
    <property type="evidence" value="ECO:0000314"/>
    <property type="project" value="MGI"/>
</dbReference>
<dbReference type="GO" id="GO:0005615">
    <property type="term" value="C:extracellular space"/>
    <property type="evidence" value="ECO:0007669"/>
    <property type="project" value="UniProtKB-KW"/>
</dbReference>
<dbReference type="GO" id="GO:0008009">
    <property type="term" value="F:chemokine activity"/>
    <property type="evidence" value="ECO:0000266"/>
    <property type="project" value="MGI"/>
</dbReference>
<dbReference type="GO" id="GO:0006955">
    <property type="term" value="P:immune response"/>
    <property type="evidence" value="ECO:0007669"/>
    <property type="project" value="InterPro"/>
</dbReference>
<dbReference type="GO" id="GO:0006954">
    <property type="term" value="P:inflammatory response"/>
    <property type="evidence" value="ECO:0007669"/>
    <property type="project" value="UniProtKB-KW"/>
</dbReference>
<dbReference type="GO" id="GO:0030595">
    <property type="term" value="P:leukocyte chemotaxis"/>
    <property type="evidence" value="ECO:0000266"/>
    <property type="project" value="MGI"/>
</dbReference>
<dbReference type="GO" id="GO:0045638">
    <property type="term" value="P:negative regulation of myeloid cell differentiation"/>
    <property type="evidence" value="ECO:0000266"/>
    <property type="project" value="MGI"/>
</dbReference>
<dbReference type="FunFam" id="2.40.50.40:FF:000024">
    <property type="entry name" value="C-C motif chemokine 21"/>
    <property type="match status" value="1"/>
</dbReference>
<dbReference type="Gene3D" id="2.40.50.40">
    <property type="match status" value="1"/>
</dbReference>
<dbReference type="InterPro" id="IPR039809">
    <property type="entry name" value="Chemokine_b/g/d"/>
</dbReference>
<dbReference type="InterPro" id="IPR001811">
    <property type="entry name" value="Chemokine_IL8-like_dom"/>
</dbReference>
<dbReference type="InterPro" id="IPR036048">
    <property type="entry name" value="Interleukin_8-like_sf"/>
</dbReference>
<dbReference type="PANTHER" id="PTHR12015:SF72">
    <property type="entry name" value="C-C MOTIF CHEMOKINE 21"/>
    <property type="match status" value="1"/>
</dbReference>
<dbReference type="PANTHER" id="PTHR12015">
    <property type="entry name" value="SMALL INDUCIBLE CYTOKINE A"/>
    <property type="match status" value="1"/>
</dbReference>
<dbReference type="Pfam" id="PF00048">
    <property type="entry name" value="IL8"/>
    <property type="match status" value="1"/>
</dbReference>
<dbReference type="SMART" id="SM00199">
    <property type="entry name" value="SCY"/>
    <property type="match status" value="1"/>
</dbReference>
<dbReference type="SUPFAM" id="SSF54117">
    <property type="entry name" value="Interleukin 8-like chemokines"/>
    <property type="match status" value="1"/>
</dbReference>
<protein>
    <recommendedName>
        <fullName>C-C motif chemokine 21b</fullName>
    </recommendedName>
    <alternativeName>
        <fullName>6Ckine</fullName>
    </alternativeName>
    <alternativeName>
        <fullName>Beta-chemokine exodus-2</fullName>
    </alternativeName>
    <alternativeName>
        <fullName>Small-inducible cytokine A21b</fullName>
    </alternativeName>
    <alternativeName>
        <fullName>Thymus-derived chemotactic agent 4</fullName>
        <shortName>TCA4</shortName>
    </alternativeName>
</protein>
<name>CC21B_MOUSE</name>
<feature type="signal peptide" evidence="4">
    <location>
        <begin position="1"/>
        <end position="23"/>
    </location>
</feature>
<feature type="chain" id="PRO_0000005222" description="C-C motif chemokine 21b">
    <location>
        <begin position="24"/>
        <end position="133"/>
    </location>
</feature>
<feature type="region of interest" description="Disordered" evidence="5">
    <location>
        <begin position="87"/>
        <end position="133"/>
    </location>
</feature>
<feature type="region of interest" description="C-terminal basic extension">
    <location>
        <begin position="98"/>
        <end position="133"/>
    </location>
</feature>
<feature type="compositionally biased region" description="Basic residues" evidence="5">
    <location>
        <begin position="104"/>
        <end position="122"/>
    </location>
</feature>
<feature type="disulfide bond" evidence="1">
    <location>
        <begin position="31"/>
        <end position="57"/>
    </location>
</feature>
<feature type="disulfide bond" evidence="1">
    <location>
        <begin position="32"/>
        <end position="75"/>
    </location>
</feature>
<feature type="disulfide bond" evidence="4">
    <location>
        <begin position="103"/>
        <end position="122"/>
    </location>
</feature>
<feature type="sequence conflict" description="In Ref. 1; AAC17929." evidence="6" ref="1">
    <original>V</original>
    <variation>D</variation>
    <location>
        <position position="13"/>
    </location>
</feature>
<organism>
    <name type="scientific">Mus musculus</name>
    <name type="common">Mouse</name>
    <dbReference type="NCBI Taxonomy" id="10090"/>
    <lineage>
        <taxon>Eukaryota</taxon>
        <taxon>Metazoa</taxon>
        <taxon>Chordata</taxon>
        <taxon>Craniata</taxon>
        <taxon>Vertebrata</taxon>
        <taxon>Euteleostomi</taxon>
        <taxon>Mammalia</taxon>
        <taxon>Eutheria</taxon>
        <taxon>Euarchontoglires</taxon>
        <taxon>Glires</taxon>
        <taxon>Rodentia</taxon>
        <taxon>Myomorpha</taxon>
        <taxon>Muroidea</taxon>
        <taxon>Muridae</taxon>
        <taxon>Murinae</taxon>
        <taxon>Mus</taxon>
        <taxon>Mus</taxon>
    </lineage>
</organism>
<proteinExistence type="evidence at protein level"/>
<reference key="1">
    <citation type="journal article" date="1997" name="J. Immunol.">
        <title>Isolation and characterization of Exodus-2, a novel C-C chemokine with a unique 37-amino acid carboxyl-terminal extension.</title>
        <authorList>
            <person name="Hromas R."/>
            <person name="Kim C.H."/>
            <person name="Klemsz M."/>
            <person name="Krathwohl M."/>
            <person name="Fife K."/>
            <person name="Cooper S."/>
            <person name="Schnizlein-Bick C."/>
            <person name="Broxmeyer H.E."/>
        </authorList>
    </citation>
    <scope>NUCLEOTIDE SEQUENCE [MRNA]</scope>
    <source>
        <tissue>Fetus</tissue>
    </source>
</reference>
<reference key="2">
    <citation type="journal article" date="1999" name="J. Exp. Med.">
        <title>The reduced expression of 6Ckine in the plt mouse results from the deletion of one of two 6Ckine genes.</title>
        <authorList>
            <person name="Vassileva G."/>
            <person name="Soto H."/>
            <person name="Zlotnik A."/>
            <person name="Nakano H."/>
            <person name="Kakiuchi T."/>
            <person name="Hedrick J.A."/>
            <person name="Lira S.A."/>
        </authorList>
    </citation>
    <scope>NUCLEOTIDE SEQUENCE [GENOMIC DNA]</scope>
    <source>
        <strain>129/SvJ</strain>
        <tissue>Embryonic stem cell</tissue>
    </source>
</reference>
<reference key="3">
    <citation type="journal article" date="2001" name="J. Immunol.">
        <title>Gene duplications at the chemokine locus on mouse chromosome 4: multiple strain-specific haplotypes and the deletion of secondary lymphoid-organ chemokine and EBI-1 ligand chemokine genes in the plt mutation.</title>
        <authorList>
            <person name="Nakano H."/>
            <person name="Gunn M.D."/>
        </authorList>
    </citation>
    <scope>NUCLEOTIDE SEQUENCE [GENOMIC DNA]</scope>
    <source>
        <strain>129/Ola</strain>
    </source>
</reference>
<reference key="4">
    <citation type="journal article" date="2009" name="PLoS Biol.">
        <title>Lineage-specific biology revealed by a finished genome assembly of the mouse.</title>
        <authorList>
            <person name="Church D.M."/>
            <person name="Goodstadt L."/>
            <person name="Hillier L.W."/>
            <person name="Zody M.C."/>
            <person name="Goldstein S."/>
            <person name="She X."/>
            <person name="Bult C.J."/>
            <person name="Agarwala R."/>
            <person name="Cherry J.L."/>
            <person name="DiCuccio M."/>
            <person name="Hlavina W."/>
            <person name="Kapustin Y."/>
            <person name="Meric P."/>
            <person name="Maglott D."/>
            <person name="Birtle Z."/>
            <person name="Marques A.C."/>
            <person name="Graves T."/>
            <person name="Zhou S."/>
            <person name="Teague B."/>
            <person name="Potamousis K."/>
            <person name="Churas C."/>
            <person name="Place M."/>
            <person name="Herschleb J."/>
            <person name="Runnheim R."/>
            <person name="Forrest D."/>
            <person name="Amos-Landgraf J."/>
            <person name="Schwartz D.C."/>
            <person name="Cheng Z."/>
            <person name="Lindblad-Toh K."/>
            <person name="Eichler E.E."/>
            <person name="Ponting C.P."/>
        </authorList>
    </citation>
    <scope>NUCLEOTIDE SEQUENCE [LARGE SCALE GENOMIC DNA]</scope>
    <source>
        <strain>C57BL/6J</strain>
    </source>
</reference>
<reference key="5">
    <citation type="journal article" date="1998" name="Proc. Natl. Acad. Sci. U.S.A.">
        <title>A chemokine expressed in lymphoid high endothelial venules promotes the adhesion and chemotaxis of naive T lymphocytes.</title>
        <authorList>
            <person name="Gunn M.D."/>
            <person name="Tangemann K."/>
            <person name="Tam C."/>
            <person name="Cyster J.G."/>
            <person name="Rosen S.D."/>
            <person name="Williams L.T."/>
        </authorList>
    </citation>
    <scope>CHARACTERIZATION</scope>
</reference>
<sequence length="133" mass="14584">MAQMMTLSLLSLVLALCIPWTQGSDGGGQDCCLKYSQKKIPYSIVRGYRKQEPSLGCPIPAILFLPRKHSKPELCANPEEGWVQNLMRRLDQPPAPGKQSPGCRKNRGTSKSGKKGKGSKGCKRTEQTQPSRG</sequence>
<evidence type="ECO:0000250" key="1"/>
<evidence type="ECO:0000250" key="2">
    <source>
        <dbReference type="UniProtKB" id="O00585"/>
    </source>
</evidence>
<evidence type="ECO:0000250" key="3">
    <source>
        <dbReference type="UniProtKB" id="P84444"/>
    </source>
</evidence>
<evidence type="ECO:0000255" key="4"/>
<evidence type="ECO:0000256" key="5">
    <source>
        <dbReference type="SAM" id="MobiDB-lite"/>
    </source>
</evidence>
<evidence type="ECO:0000305" key="6"/>